<accession>Q9SIT7</accession>
<comment type="similarity">
    <text evidence="1">Belongs to the PPR family. PCMP-E subfamily.</text>
</comment>
<comment type="online information" name="Pentatricopeptide repeat proteins">
    <link uri="https://ppr.plantenergy.uwa.edu.au"/>
</comment>
<name>PP151_ARATH</name>
<proteinExistence type="inferred from homology"/>
<evidence type="ECO:0000305" key="1"/>
<sequence length="697" mass="78091">MATKSFLKLAADLSSFTDSSPFAKLLDSCIKSKLSAIYVRYVHASVIKSGFSNEIFIQNRLIDAYSKCGSLEDGRQVFDKMPQRNIYTWNSVVTGLTKLGFLDEADSLFRSMPERDQCTWNSMVSGFAQHDRCEEALCYFAMMHKEGFVLNEYSFASVLSACSGLNDMNKGVQVHSLIAKSPFLSDVYIGSALVDMYSKCGNVNDAQRVFDEMGDRNVVSWNSLITCFEQNGPAVEALDVFQMMLESRVEPDEVTLASVISACASLSAIKVGQEVHGRVVKNDKLRNDIILSNAFVDMYAKCSRIKEARFIFDSMPIRNVIAETSMISGYAMAASTKAARLMFTKMAERNVVSWNALIAGYTQNGENEEALSLFCLLKRESVCPTHYSFANILKACADLAELHLGMQAHVHVLKHGFKFQSGEEDDIFVGNSLIDMYVKCGCVEEGYLVFRKMMERDCVSWNAMIIGFAQNGYGNEALELFREMLESGEKPDHITMIGVLSACGHAGFVEEGRHYFSSMTRDFGVAPLRDHYTCMVDLLGRAGFLEEAKSMIEEMPMQPDSVIWGSLLAACKVHRNITLGKYVAEKLLEVEPSNSGPYVLLSNMYAELGKWEDVMNVRKSMRKEGVTKQPGCSWIKIQGHDHVFMVKDKSHPRKKQIHSLLDILIAEMRPEQDHTEIGSLSSEEMDYSSNLLWDNAM</sequence>
<feature type="chain" id="PRO_0000356011" description="Pentatricopeptide repeat-containing protein At2g13600">
    <location>
        <begin position="1"/>
        <end position="697"/>
    </location>
</feature>
<feature type="repeat" description="PPR 1">
    <location>
        <begin position="18"/>
        <end position="53"/>
    </location>
</feature>
<feature type="repeat" description="PPR 2">
    <location>
        <begin position="54"/>
        <end position="84"/>
    </location>
</feature>
<feature type="repeat" description="PPR 3">
    <location>
        <begin position="85"/>
        <end position="115"/>
    </location>
</feature>
<feature type="repeat" description="PPR 4">
    <location>
        <begin position="116"/>
        <end position="150"/>
    </location>
</feature>
<feature type="repeat" description="PPR 5">
    <location>
        <begin position="151"/>
        <end position="185"/>
    </location>
</feature>
<feature type="repeat" description="PPR 6">
    <location>
        <begin position="186"/>
        <end position="216"/>
    </location>
</feature>
<feature type="repeat" description="PPR 7">
    <location>
        <begin position="217"/>
        <end position="251"/>
    </location>
</feature>
<feature type="repeat" description="PPR 8">
    <location>
        <begin position="252"/>
        <end position="282"/>
    </location>
</feature>
<feature type="repeat" description="PPR 9">
    <location>
        <begin position="288"/>
        <end position="322"/>
    </location>
</feature>
<feature type="repeat" description="PPR 10">
    <location>
        <begin position="324"/>
        <end position="349"/>
    </location>
</feature>
<feature type="repeat" description="PPR 11">
    <location>
        <begin position="350"/>
        <end position="384"/>
    </location>
</feature>
<feature type="repeat" description="PPR 12">
    <location>
        <begin position="385"/>
        <end position="419"/>
    </location>
</feature>
<feature type="repeat" description="PPR 13">
    <location>
        <begin position="426"/>
        <end position="456"/>
    </location>
</feature>
<feature type="repeat" description="PPR 14">
    <location>
        <begin position="457"/>
        <end position="491"/>
    </location>
</feature>
<feature type="repeat" description="PPR 15">
    <location>
        <begin position="492"/>
        <end position="527"/>
    </location>
</feature>
<feature type="repeat" description="PPR 16">
    <location>
        <begin position="528"/>
        <end position="558"/>
    </location>
</feature>
<feature type="region of interest" description="Type E motif">
    <location>
        <begin position="563"/>
        <end position="638"/>
    </location>
</feature>
<feature type="region of interest" description="Type E(+) motif">
    <location>
        <begin position="639"/>
        <end position="669"/>
    </location>
</feature>
<reference key="1">
    <citation type="journal article" date="1999" name="Nature">
        <title>Sequence and analysis of chromosome 2 of the plant Arabidopsis thaliana.</title>
        <authorList>
            <person name="Lin X."/>
            <person name="Kaul S."/>
            <person name="Rounsley S.D."/>
            <person name="Shea T.P."/>
            <person name="Benito M.-I."/>
            <person name="Town C.D."/>
            <person name="Fujii C.Y."/>
            <person name="Mason T.M."/>
            <person name="Bowman C.L."/>
            <person name="Barnstead M.E."/>
            <person name="Feldblyum T.V."/>
            <person name="Buell C.R."/>
            <person name="Ketchum K.A."/>
            <person name="Lee J.J."/>
            <person name="Ronning C.M."/>
            <person name="Koo H.L."/>
            <person name="Moffat K.S."/>
            <person name="Cronin L.A."/>
            <person name="Shen M."/>
            <person name="Pai G."/>
            <person name="Van Aken S."/>
            <person name="Umayam L."/>
            <person name="Tallon L.J."/>
            <person name="Gill J.E."/>
            <person name="Adams M.D."/>
            <person name="Carrera A.J."/>
            <person name="Creasy T.H."/>
            <person name="Goodman H.M."/>
            <person name="Somerville C.R."/>
            <person name="Copenhaver G.P."/>
            <person name="Preuss D."/>
            <person name="Nierman W.C."/>
            <person name="White O."/>
            <person name="Eisen J.A."/>
            <person name="Salzberg S.L."/>
            <person name="Fraser C.M."/>
            <person name="Venter J.C."/>
        </authorList>
    </citation>
    <scope>NUCLEOTIDE SEQUENCE [LARGE SCALE GENOMIC DNA]</scope>
    <source>
        <strain>cv. Columbia</strain>
    </source>
</reference>
<reference key="2">
    <citation type="journal article" date="2017" name="Plant J.">
        <title>Araport11: a complete reannotation of the Arabidopsis thaliana reference genome.</title>
        <authorList>
            <person name="Cheng C.Y."/>
            <person name="Krishnakumar V."/>
            <person name="Chan A.P."/>
            <person name="Thibaud-Nissen F."/>
            <person name="Schobel S."/>
            <person name="Town C.D."/>
        </authorList>
    </citation>
    <scope>GENOME REANNOTATION</scope>
    <source>
        <strain>cv. Columbia</strain>
    </source>
</reference>
<reference key="3">
    <citation type="journal article" date="2004" name="Plant Cell">
        <title>Genome-wide analysis of Arabidopsis pentatricopeptide repeat proteins reveals their essential role in organelle biogenesis.</title>
        <authorList>
            <person name="Lurin C."/>
            <person name="Andres C."/>
            <person name="Aubourg S."/>
            <person name="Bellaoui M."/>
            <person name="Bitton F."/>
            <person name="Bruyere C."/>
            <person name="Caboche M."/>
            <person name="Debast C."/>
            <person name="Gualberto J."/>
            <person name="Hoffmann B."/>
            <person name="Lecharny A."/>
            <person name="Le Ret M."/>
            <person name="Martin-Magniette M.-L."/>
            <person name="Mireau H."/>
            <person name="Peeters N."/>
            <person name="Renou J.-P."/>
            <person name="Szurek B."/>
            <person name="Taconnat L."/>
            <person name="Small I."/>
        </authorList>
    </citation>
    <scope>GENE FAMILY</scope>
</reference>
<dbReference type="EMBL" id="AC007063">
    <property type="protein sequence ID" value="AAD22682.1"/>
    <property type="molecule type" value="Genomic_DNA"/>
</dbReference>
<dbReference type="EMBL" id="CP002685">
    <property type="protein sequence ID" value="AEC06244.1"/>
    <property type="molecule type" value="Genomic_DNA"/>
</dbReference>
<dbReference type="PIR" id="H84508">
    <property type="entry name" value="H84508"/>
</dbReference>
<dbReference type="RefSeq" id="NP_178983.1">
    <property type="nucleotide sequence ID" value="NM_126939.2"/>
</dbReference>
<dbReference type="SMR" id="Q9SIT7"/>
<dbReference type="FunCoup" id="Q9SIT7">
    <property type="interactions" value="150"/>
</dbReference>
<dbReference type="STRING" id="3702.Q9SIT7"/>
<dbReference type="PaxDb" id="3702-AT2G13600.1"/>
<dbReference type="ProteomicsDB" id="249135"/>
<dbReference type="EnsemblPlants" id="AT2G13600.1">
    <property type="protein sequence ID" value="AT2G13600.1"/>
    <property type="gene ID" value="AT2G13600"/>
</dbReference>
<dbReference type="GeneID" id="815845"/>
<dbReference type="Gramene" id="AT2G13600.1">
    <property type="protein sequence ID" value="AT2G13600.1"/>
    <property type="gene ID" value="AT2G13600"/>
</dbReference>
<dbReference type="KEGG" id="ath:AT2G13600"/>
<dbReference type="Araport" id="AT2G13600"/>
<dbReference type="TAIR" id="AT2G13600">
    <property type="gene designation" value="SLO2"/>
</dbReference>
<dbReference type="eggNOG" id="KOG4197">
    <property type="taxonomic scope" value="Eukaryota"/>
</dbReference>
<dbReference type="HOGENOM" id="CLU_002706_37_8_1"/>
<dbReference type="InParanoid" id="Q9SIT7"/>
<dbReference type="OMA" id="RVHVFMV"/>
<dbReference type="PhylomeDB" id="Q9SIT7"/>
<dbReference type="PRO" id="PR:Q9SIT7"/>
<dbReference type="Proteomes" id="UP000006548">
    <property type="component" value="Chromosome 2"/>
</dbReference>
<dbReference type="ExpressionAtlas" id="Q9SIT7">
    <property type="expression patterns" value="baseline and differential"/>
</dbReference>
<dbReference type="GO" id="GO:0005739">
    <property type="term" value="C:mitochondrion"/>
    <property type="evidence" value="ECO:0000314"/>
    <property type="project" value="TAIR"/>
</dbReference>
<dbReference type="GO" id="GO:0003723">
    <property type="term" value="F:RNA binding"/>
    <property type="evidence" value="ECO:0007669"/>
    <property type="project" value="InterPro"/>
</dbReference>
<dbReference type="GO" id="GO:0080156">
    <property type="term" value="P:mitochondrial mRNA modification"/>
    <property type="evidence" value="ECO:0000315"/>
    <property type="project" value="TAIR"/>
</dbReference>
<dbReference type="GO" id="GO:0010182">
    <property type="term" value="P:sugar mediated signaling pathway"/>
    <property type="evidence" value="ECO:0000315"/>
    <property type="project" value="TAIR"/>
</dbReference>
<dbReference type="FunFam" id="1.25.40.10:FF:000344">
    <property type="entry name" value="Pentatricopeptide repeat-containing protein"/>
    <property type="match status" value="1"/>
</dbReference>
<dbReference type="FunFam" id="1.25.40.10:FF:000853">
    <property type="entry name" value="Pentatricopeptide repeat-containing protein At2g13600"/>
    <property type="match status" value="1"/>
</dbReference>
<dbReference type="FunFam" id="1.25.40.10:FF:002018">
    <property type="entry name" value="Pentatricopeptide repeat-containing protein At2g13600"/>
    <property type="match status" value="1"/>
</dbReference>
<dbReference type="FunFam" id="1.25.40.10:FF:000031">
    <property type="entry name" value="Pentatricopeptide repeat-containing protein mitochondrial"/>
    <property type="match status" value="1"/>
</dbReference>
<dbReference type="FunFam" id="1.25.40.10:FF:001181">
    <property type="entry name" value="PPR containing plant-like protein"/>
    <property type="match status" value="1"/>
</dbReference>
<dbReference type="Gene3D" id="1.25.40.10">
    <property type="entry name" value="Tetratricopeptide repeat domain"/>
    <property type="match status" value="5"/>
</dbReference>
<dbReference type="InterPro" id="IPR046848">
    <property type="entry name" value="E_motif"/>
</dbReference>
<dbReference type="InterPro" id="IPR002885">
    <property type="entry name" value="Pentatricopeptide_rpt"/>
</dbReference>
<dbReference type="InterPro" id="IPR046960">
    <property type="entry name" value="PPR_At4g14850-like_plant"/>
</dbReference>
<dbReference type="InterPro" id="IPR011990">
    <property type="entry name" value="TPR-like_helical_dom_sf"/>
</dbReference>
<dbReference type="NCBIfam" id="TIGR00756">
    <property type="entry name" value="PPR"/>
    <property type="match status" value="8"/>
</dbReference>
<dbReference type="PANTHER" id="PTHR47926">
    <property type="entry name" value="PENTATRICOPEPTIDE REPEAT-CONTAINING PROTEIN"/>
    <property type="match status" value="1"/>
</dbReference>
<dbReference type="PANTHER" id="PTHR47926:SF433">
    <property type="entry name" value="PENTATRICOPEPTIDE REPEAT-CONTAINING PROTEIN"/>
    <property type="match status" value="1"/>
</dbReference>
<dbReference type="Pfam" id="PF20431">
    <property type="entry name" value="E_motif"/>
    <property type="match status" value="1"/>
</dbReference>
<dbReference type="Pfam" id="PF01535">
    <property type="entry name" value="PPR"/>
    <property type="match status" value="4"/>
</dbReference>
<dbReference type="Pfam" id="PF13041">
    <property type="entry name" value="PPR_2"/>
    <property type="match status" value="4"/>
</dbReference>
<dbReference type="PROSITE" id="PS51375">
    <property type="entry name" value="PPR"/>
    <property type="match status" value="15"/>
</dbReference>
<organism>
    <name type="scientific">Arabidopsis thaliana</name>
    <name type="common">Mouse-ear cress</name>
    <dbReference type="NCBI Taxonomy" id="3702"/>
    <lineage>
        <taxon>Eukaryota</taxon>
        <taxon>Viridiplantae</taxon>
        <taxon>Streptophyta</taxon>
        <taxon>Embryophyta</taxon>
        <taxon>Tracheophyta</taxon>
        <taxon>Spermatophyta</taxon>
        <taxon>Magnoliopsida</taxon>
        <taxon>eudicotyledons</taxon>
        <taxon>Gunneridae</taxon>
        <taxon>Pentapetalae</taxon>
        <taxon>rosids</taxon>
        <taxon>malvids</taxon>
        <taxon>Brassicales</taxon>
        <taxon>Brassicaceae</taxon>
        <taxon>Camelineae</taxon>
        <taxon>Arabidopsis</taxon>
    </lineage>
</organism>
<gene>
    <name type="primary">PCMP-E76</name>
    <name type="ordered locus">At2g13600</name>
    <name type="ORF">T10F5.14</name>
</gene>
<protein>
    <recommendedName>
        <fullName>Pentatricopeptide repeat-containing protein At2g13600</fullName>
    </recommendedName>
</protein>
<keyword id="KW-1185">Reference proteome</keyword>
<keyword id="KW-0677">Repeat</keyword>